<feature type="chain" id="PRO_0000063482" description="Chaperonin GroEL 1">
    <location>
        <begin position="1"/>
        <end position="566"/>
    </location>
</feature>
<feature type="region of interest" description="Disordered" evidence="2">
    <location>
        <begin position="520"/>
        <end position="540"/>
    </location>
</feature>
<feature type="compositionally biased region" description="Gly residues" evidence="2">
    <location>
        <begin position="529"/>
        <end position="540"/>
    </location>
</feature>
<feature type="binding site" evidence="1">
    <location>
        <begin position="29"/>
        <end position="32"/>
    </location>
    <ligand>
        <name>ATP</name>
        <dbReference type="ChEBI" id="CHEBI:30616"/>
    </ligand>
</feature>
<feature type="binding site" evidence="1">
    <location>
        <begin position="86"/>
        <end position="90"/>
    </location>
    <ligand>
        <name>ATP</name>
        <dbReference type="ChEBI" id="CHEBI:30616"/>
    </ligand>
</feature>
<feature type="binding site" evidence="1">
    <location>
        <position position="413"/>
    </location>
    <ligand>
        <name>ATP</name>
        <dbReference type="ChEBI" id="CHEBI:30616"/>
    </ligand>
</feature>
<feature type="binding site" evidence="1">
    <location>
        <position position="492"/>
    </location>
    <ligand>
        <name>ATP</name>
        <dbReference type="ChEBI" id="CHEBI:30616"/>
    </ligand>
</feature>
<comment type="function">
    <text evidence="1">Together with its co-chaperonin GroES, plays an essential role in assisting protein folding. The GroEL-GroES system forms a nano-cage that allows encapsulation of the non-native substrate proteins and provides a physical environment optimized to promote and accelerate protein folding.</text>
</comment>
<comment type="catalytic activity">
    <reaction evidence="1">
        <text>ATP + H2O + a folded polypeptide = ADP + phosphate + an unfolded polypeptide.</text>
        <dbReference type="EC" id="5.6.1.7"/>
    </reaction>
</comment>
<comment type="subunit">
    <text evidence="1">Forms a cylinder of 14 subunits composed of two heptameric rings stacked back-to-back. Interacts with the co-chaperonin GroES.</text>
</comment>
<comment type="subcellular location">
    <subcellularLocation>
        <location evidence="1">Cytoplasm</location>
    </subcellularLocation>
</comment>
<comment type="similarity">
    <text evidence="1">Belongs to the chaperonin (HSP60) family.</text>
</comment>
<name>CH601_PROMM</name>
<sequence length="566" mass="59389">MAKLLSFSDDSRSALERGVNSLADAVRVTIGPRGRNVVLEKKFGAPDIVNDGVTIAKEIELDDPFENLGAKLIQQVASKTKDKAGDGTTTATVLAQAMVHEGLRNVAAGASPIELRRGMEKAVAQLVEELAQLSQSVGGNAIHQVATVSSGGDQEVGRMVSEAMDKVSADGVITVEESKSLATELEVTEGMAFDRGYSSPYFVTDADRQICEFENALLLLTDRKISSVSDLVPILESLQKSGSPLVIIAEEVEGEALATLVVNKNRGVLQVAAVRAPSFGDRRKAALADIAVLTGGTVISEDRAMTLEKVSQDDLGQVRRITISKDNTTIVAKDENRDAVNARVASIKRELDETDSEYDREKLNERIAKLAGGVAVIKVGAPTETELKNRKLRIEDALNATRAAVEEGIVAGGGTTLLHLSKGLSKLAEQLNDDQRTGVEIVQRALSAPARQIAINAGENGDVVISEIQRLNKGFNAISSTYEDLLEAGILDATKVVRLALQDAVSIASMMVTTELVIADKPEPPAPAGDGGGDPMGGMGGMGGMGGMGGMGGMGGMGGMGMPGMM</sequence>
<protein>
    <recommendedName>
        <fullName evidence="1">Chaperonin GroEL 1</fullName>
        <ecNumber evidence="1">5.6.1.7</ecNumber>
    </recommendedName>
    <alternativeName>
        <fullName evidence="1">60 kDa chaperonin 1</fullName>
    </alternativeName>
    <alternativeName>
        <fullName evidence="1">Chaperonin-60 1</fullName>
        <shortName evidence="1">Cpn60 1</shortName>
    </alternativeName>
</protein>
<gene>
    <name evidence="1" type="primary">groEL1</name>
    <name evidence="1" type="synonym">groL1</name>
    <name type="ordered locus">PMT_1334</name>
</gene>
<dbReference type="EC" id="5.6.1.7" evidence="1"/>
<dbReference type="EMBL" id="BX548175">
    <property type="protein sequence ID" value="CAE21509.1"/>
    <property type="molecule type" value="Genomic_DNA"/>
</dbReference>
<dbReference type="RefSeq" id="WP_011130702.1">
    <property type="nucleotide sequence ID" value="NC_005071.1"/>
</dbReference>
<dbReference type="SMR" id="Q7V643"/>
<dbReference type="KEGG" id="pmt:PMT_1334"/>
<dbReference type="eggNOG" id="COG0459">
    <property type="taxonomic scope" value="Bacteria"/>
</dbReference>
<dbReference type="HOGENOM" id="CLU_016503_3_0_3"/>
<dbReference type="OrthoDB" id="9766614at2"/>
<dbReference type="Proteomes" id="UP000001423">
    <property type="component" value="Chromosome"/>
</dbReference>
<dbReference type="GO" id="GO:0005737">
    <property type="term" value="C:cytoplasm"/>
    <property type="evidence" value="ECO:0007669"/>
    <property type="project" value="UniProtKB-SubCell"/>
</dbReference>
<dbReference type="GO" id="GO:0005524">
    <property type="term" value="F:ATP binding"/>
    <property type="evidence" value="ECO:0007669"/>
    <property type="project" value="UniProtKB-UniRule"/>
</dbReference>
<dbReference type="GO" id="GO:0140662">
    <property type="term" value="F:ATP-dependent protein folding chaperone"/>
    <property type="evidence" value="ECO:0007669"/>
    <property type="project" value="InterPro"/>
</dbReference>
<dbReference type="GO" id="GO:0016853">
    <property type="term" value="F:isomerase activity"/>
    <property type="evidence" value="ECO:0007669"/>
    <property type="project" value="UniProtKB-KW"/>
</dbReference>
<dbReference type="GO" id="GO:0051082">
    <property type="term" value="F:unfolded protein binding"/>
    <property type="evidence" value="ECO:0007669"/>
    <property type="project" value="UniProtKB-UniRule"/>
</dbReference>
<dbReference type="GO" id="GO:0042026">
    <property type="term" value="P:protein refolding"/>
    <property type="evidence" value="ECO:0007669"/>
    <property type="project" value="UniProtKB-UniRule"/>
</dbReference>
<dbReference type="CDD" id="cd03344">
    <property type="entry name" value="GroEL"/>
    <property type="match status" value="1"/>
</dbReference>
<dbReference type="FunFam" id="3.50.7.10:FF:000001">
    <property type="entry name" value="60 kDa chaperonin"/>
    <property type="match status" value="1"/>
</dbReference>
<dbReference type="Gene3D" id="3.50.7.10">
    <property type="entry name" value="GroEL"/>
    <property type="match status" value="1"/>
</dbReference>
<dbReference type="Gene3D" id="1.10.560.10">
    <property type="entry name" value="GroEL-like equatorial domain"/>
    <property type="match status" value="1"/>
</dbReference>
<dbReference type="Gene3D" id="3.30.260.10">
    <property type="entry name" value="TCP-1-like chaperonin intermediate domain"/>
    <property type="match status" value="1"/>
</dbReference>
<dbReference type="HAMAP" id="MF_00600">
    <property type="entry name" value="CH60"/>
    <property type="match status" value="1"/>
</dbReference>
<dbReference type="InterPro" id="IPR018370">
    <property type="entry name" value="Chaperonin_Cpn60_CS"/>
</dbReference>
<dbReference type="InterPro" id="IPR001844">
    <property type="entry name" value="Cpn60/GroEL"/>
</dbReference>
<dbReference type="InterPro" id="IPR002423">
    <property type="entry name" value="Cpn60/GroEL/TCP-1"/>
</dbReference>
<dbReference type="InterPro" id="IPR027409">
    <property type="entry name" value="GroEL-like_apical_dom_sf"/>
</dbReference>
<dbReference type="InterPro" id="IPR027413">
    <property type="entry name" value="GROEL-like_equatorial_sf"/>
</dbReference>
<dbReference type="InterPro" id="IPR027410">
    <property type="entry name" value="TCP-1-like_intermed_sf"/>
</dbReference>
<dbReference type="NCBIfam" id="TIGR02348">
    <property type="entry name" value="GroEL"/>
    <property type="match status" value="1"/>
</dbReference>
<dbReference type="NCBIfam" id="NF000592">
    <property type="entry name" value="PRK00013.1"/>
    <property type="match status" value="1"/>
</dbReference>
<dbReference type="NCBIfam" id="NF009487">
    <property type="entry name" value="PRK12849.1"/>
    <property type="match status" value="1"/>
</dbReference>
<dbReference type="NCBIfam" id="NF009488">
    <property type="entry name" value="PRK12850.1"/>
    <property type="match status" value="1"/>
</dbReference>
<dbReference type="NCBIfam" id="NF009489">
    <property type="entry name" value="PRK12851.1"/>
    <property type="match status" value="1"/>
</dbReference>
<dbReference type="PANTHER" id="PTHR45633">
    <property type="entry name" value="60 KDA HEAT SHOCK PROTEIN, MITOCHONDRIAL"/>
    <property type="match status" value="1"/>
</dbReference>
<dbReference type="Pfam" id="PF00118">
    <property type="entry name" value="Cpn60_TCP1"/>
    <property type="match status" value="1"/>
</dbReference>
<dbReference type="PRINTS" id="PR00298">
    <property type="entry name" value="CHAPERONIN60"/>
</dbReference>
<dbReference type="SUPFAM" id="SSF52029">
    <property type="entry name" value="GroEL apical domain-like"/>
    <property type="match status" value="1"/>
</dbReference>
<dbReference type="SUPFAM" id="SSF48592">
    <property type="entry name" value="GroEL equatorial domain-like"/>
    <property type="match status" value="1"/>
</dbReference>
<dbReference type="SUPFAM" id="SSF54849">
    <property type="entry name" value="GroEL-intermediate domain like"/>
    <property type="match status" value="1"/>
</dbReference>
<dbReference type="PROSITE" id="PS00296">
    <property type="entry name" value="CHAPERONINS_CPN60"/>
    <property type="match status" value="1"/>
</dbReference>
<organism>
    <name type="scientific">Prochlorococcus marinus (strain MIT 9313)</name>
    <dbReference type="NCBI Taxonomy" id="74547"/>
    <lineage>
        <taxon>Bacteria</taxon>
        <taxon>Bacillati</taxon>
        <taxon>Cyanobacteriota</taxon>
        <taxon>Cyanophyceae</taxon>
        <taxon>Synechococcales</taxon>
        <taxon>Prochlorococcaceae</taxon>
        <taxon>Prochlorococcus</taxon>
    </lineage>
</organism>
<keyword id="KW-0067">ATP-binding</keyword>
<keyword id="KW-0143">Chaperone</keyword>
<keyword id="KW-0963">Cytoplasm</keyword>
<keyword id="KW-0413">Isomerase</keyword>
<keyword id="KW-0547">Nucleotide-binding</keyword>
<keyword id="KW-1185">Reference proteome</keyword>
<reference key="1">
    <citation type="journal article" date="2003" name="Nature">
        <title>Genome divergence in two Prochlorococcus ecotypes reflects oceanic niche differentiation.</title>
        <authorList>
            <person name="Rocap G."/>
            <person name="Larimer F.W."/>
            <person name="Lamerdin J.E."/>
            <person name="Malfatti S."/>
            <person name="Chain P."/>
            <person name="Ahlgren N.A."/>
            <person name="Arellano A."/>
            <person name="Coleman M."/>
            <person name="Hauser L."/>
            <person name="Hess W.R."/>
            <person name="Johnson Z.I."/>
            <person name="Land M.L."/>
            <person name="Lindell D."/>
            <person name="Post A.F."/>
            <person name="Regala W."/>
            <person name="Shah M."/>
            <person name="Shaw S.L."/>
            <person name="Steglich C."/>
            <person name="Sullivan M.B."/>
            <person name="Ting C.S."/>
            <person name="Tolonen A."/>
            <person name="Webb E.A."/>
            <person name="Zinser E.R."/>
            <person name="Chisholm S.W."/>
        </authorList>
    </citation>
    <scope>NUCLEOTIDE SEQUENCE [LARGE SCALE GENOMIC DNA]</scope>
    <source>
        <strain>MIT 9313</strain>
    </source>
</reference>
<proteinExistence type="inferred from homology"/>
<accession>Q7V643</accession>
<evidence type="ECO:0000255" key="1">
    <source>
        <dbReference type="HAMAP-Rule" id="MF_00600"/>
    </source>
</evidence>
<evidence type="ECO:0000256" key="2">
    <source>
        <dbReference type="SAM" id="MobiDB-lite"/>
    </source>
</evidence>